<comment type="function">
    <text evidence="1">Regulates transcriptional attenuation of the pyrimidine nucleotide (pyr) operon by binding in a uridine-dependent manner to specific sites on pyr mRNA. This disrupts an antiterminator hairpin in the RNA and favors formation of a downstream transcription terminator, leading to a reduced expression of downstream genes.</text>
</comment>
<comment type="function">
    <text evidence="1">Also displays a weak uracil phosphoribosyltransferase activity which is not physiologically significant.</text>
</comment>
<comment type="catalytic activity">
    <reaction evidence="1">
        <text>UMP + diphosphate = 5-phospho-alpha-D-ribose 1-diphosphate + uracil</text>
        <dbReference type="Rhea" id="RHEA:13017"/>
        <dbReference type="ChEBI" id="CHEBI:17568"/>
        <dbReference type="ChEBI" id="CHEBI:33019"/>
        <dbReference type="ChEBI" id="CHEBI:57865"/>
        <dbReference type="ChEBI" id="CHEBI:58017"/>
        <dbReference type="EC" id="2.4.2.9"/>
    </reaction>
</comment>
<comment type="subunit">
    <text evidence="1">Homodimer and homohexamer; in equilibrium.</text>
</comment>
<comment type="similarity">
    <text evidence="1">Belongs to the purine/pyrimidine phosphoribosyltransferase family. PyrR subfamily.</text>
</comment>
<organism>
    <name type="scientific">Streptococcus equi subsp. zooepidemicus (strain H70)</name>
    <dbReference type="NCBI Taxonomy" id="553483"/>
    <lineage>
        <taxon>Bacteria</taxon>
        <taxon>Bacillati</taxon>
        <taxon>Bacillota</taxon>
        <taxon>Bacilli</taxon>
        <taxon>Lactobacillales</taxon>
        <taxon>Streptococcaceae</taxon>
        <taxon>Streptococcus</taxon>
    </lineage>
</organism>
<feature type="chain" id="PRO_1000213953" description="Bifunctional protein PyrR">
    <location>
        <begin position="1"/>
        <end position="173"/>
    </location>
</feature>
<feature type="short sequence motif" description="PRPP-binding" evidence="1">
    <location>
        <begin position="93"/>
        <end position="105"/>
    </location>
</feature>
<evidence type="ECO:0000255" key="1">
    <source>
        <dbReference type="HAMAP-Rule" id="MF_01219"/>
    </source>
</evidence>
<proteinExistence type="inferred from homology"/>
<accession>C0ME81</accession>
<name>PYRR_STRS7</name>
<protein>
    <recommendedName>
        <fullName evidence="1">Bifunctional protein PyrR</fullName>
    </recommendedName>
    <domain>
        <recommendedName>
            <fullName evidence="1">Pyrimidine operon regulatory protein</fullName>
        </recommendedName>
    </domain>
    <domain>
        <recommendedName>
            <fullName evidence="1">Uracil phosphoribosyltransferase</fullName>
            <shortName evidence="1">UPRTase</shortName>
            <ecNumber evidence="1">2.4.2.9</ecNumber>
        </recommendedName>
    </domain>
</protein>
<sequence length="173" mass="19489">MKSKVIVDELTMKRAITRITYEIIERNKQLDNVVLVGIKTRGVYLARRIQERLEQLESLHLAVGELDTKPFRDDMRVEEDTTSMPVDITGKDIILVDDVLYTGRTIRAAIDNLVSLGRPGRVSLAVLVDRGHRELPIRADYVGKNIPTSKTEEIVVEVVEVDGQDRISIVDPG</sequence>
<dbReference type="EC" id="2.4.2.9" evidence="1"/>
<dbReference type="EMBL" id="FM204884">
    <property type="protein sequence ID" value="CAW99037.1"/>
    <property type="molecule type" value="Genomic_DNA"/>
</dbReference>
<dbReference type="SMR" id="C0ME81"/>
<dbReference type="KEGG" id="seq:SZO_08440"/>
<dbReference type="eggNOG" id="COG2065">
    <property type="taxonomic scope" value="Bacteria"/>
</dbReference>
<dbReference type="HOGENOM" id="CLU_094234_2_1_9"/>
<dbReference type="Proteomes" id="UP000001368">
    <property type="component" value="Chromosome"/>
</dbReference>
<dbReference type="GO" id="GO:0003723">
    <property type="term" value="F:RNA binding"/>
    <property type="evidence" value="ECO:0007669"/>
    <property type="project" value="UniProtKB-UniRule"/>
</dbReference>
<dbReference type="GO" id="GO:0004845">
    <property type="term" value="F:uracil phosphoribosyltransferase activity"/>
    <property type="evidence" value="ECO:0007669"/>
    <property type="project" value="UniProtKB-UniRule"/>
</dbReference>
<dbReference type="GO" id="GO:0006353">
    <property type="term" value="P:DNA-templated transcription termination"/>
    <property type="evidence" value="ECO:0007669"/>
    <property type="project" value="UniProtKB-UniRule"/>
</dbReference>
<dbReference type="CDD" id="cd06223">
    <property type="entry name" value="PRTases_typeI"/>
    <property type="match status" value="1"/>
</dbReference>
<dbReference type="FunFam" id="3.40.50.2020:FF:000020">
    <property type="entry name" value="Bifunctional protein PyrR"/>
    <property type="match status" value="1"/>
</dbReference>
<dbReference type="Gene3D" id="3.40.50.2020">
    <property type="match status" value="1"/>
</dbReference>
<dbReference type="HAMAP" id="MF_01219">
    <property type="entry name" value="PyrR"/>
    <property type="match status" value="1"/>
</dbReference>
<dbReference type="InterPro" id="IPR000836">
    <property type="entry name" value="PRibTrfase_dom"/>
</dbReference>
<dbReference type="InterPro" id="IPR029057">
    <property type="entry name" value="PRTase-like"/>
</dbReference>
<dbReference type="InterPro" id="IPR023050">
    <property type="entry name" value="PyrR"/>
</dbReference>
<dbReference type="InterPro" id="IPR050137">
    <property type="entry name" value="PyrR_bifunctional"/>
</dbReference>
<dbReference type="NCBIfam" id="NF003548">
    <property type="entry name" value="PRK05205.1-4"/>
    <property type="match status" value="1"/>
</dbReference>
<dbReference type="NCBIfam" id="NF003549">
    <property type="entry name" value="PRK05205.1-5"/>
    <property type="match status" value="1"/>
</dbReference>
<dbReference type="PANTHER" id="PTHR11608">
    <property type="entry name" value="BIFUNCTIONAL PROTEIN PYRR"/>
    <property type="match status" value="1"/>
</dbReference>
<dbReference type="PANTHER" id="PTHR11608:SF0">
    <property type="entry name" value="BIFUNCTIONAL PROTEIN PYRR"/>
    <property type="match status" value="1"/>
</dbReference>
<dbReference type="Pfam" id="PF00156">
    <property type="entry name" value="Pribosyltran"/>
    <property type="match status" value="1"/>
</dbReference>
<dbReference type="SUPFAM" id="SSF53271">
    <property type="entry name" value="PRTase-like"/>
    <property type="match status" value="1"/>
</dbReference>
<gene>
    <name evidence="1" type="primary">pyrR</name>
    <name type="ordered locus">SZO_08440</name>
</gene>
<reference key="1">
    <citation type="journal article" date="2009" name="PLoS Pathog.">
        <title>Genomic evidence for the evolution of Streptococcus equi: host restriction, increased virulence, and genetic exchange with human pathogens.</title>
        <authorList>
            <person name="Holden M.T.G."/>
            <person name="Heather Z."/>
            <person name="Paillot R."/>
            <person name="Steward K.F."/>
            <person name="Webb K."/>
            <person name="Ainslie F."/>
            <person name="Jourdan T."/>
            <person name="Bason N.C."/>
            <person name="Holroyd N.E."/>
            <person name="Mungall K."/>
            <person name="Quail M.A."/>
            <person name="Sanders M."/>
            <person name="Simmonds M."/>
            <person name="Willey D."/>
            <person name="Brooks K."/>
            <person name="Aanensen D.M."/>
            <person name="Spratt B.G."/>
            <person name="Jolley K.A."/>
            <person name="Maiden M.C.J."/>
            <person name="Kehoe M."/>
            <person name="Chanter N."/>
            <person name="Bentley S.D."/>
            <person name="Robinson C."/>
            <person name="Maskell D.J."/>
            <person name="Parkhill J."/>
            <person name="Waller A.S."/>
        </authorList>
    </citation>
    <scope>NUCLEOTIDE SEQUENCE [LARGE SCALE GENOMIC DNA]</scope>
    <source>
        <strain>H70</strain>
    </source>
</reference>
<keyword id="KW-0328">Glycosyltransferase</keyword>
<keyword id="KW-0694">RNA-binding</keyword>
<keyword id="KW-0804">Transcription</keyword>
<keyword id="KW-0805">Transcription regulation</keyword>
<keyword id="KW-0806">Transcription termination</keyword>
<keyword id="KW-0808">Transferase</keyword>